<name>C74A2_PARAR</name>
<organism>
    <name type="scientific">Parthenium argentatum</name>
    <name type="common">Guayule rubber plant</name>
    <dbReference type="NCBI Taxonomy" id="35935"/>
    <lineage>
        <taxon>Eukaryota</taxon>
        <taxon>Viridiplantae</taxon>
        <taxon>Streptophyta</taxon>
        <taxon>Embryophyta</taxon>
        <taxon>Tracheophyta</taxon>
        <taxon>Spermatophyta</taxon>
        <taxon>Magnoliopsida</taxon>
        <taxon>eudicotyledons</taxon>
        <taxon>Gunneridae</taxon>
        <taxon>Pentapetalae</taxon>
        <taxon>asterids</taxon>
        <taxon>campanulids</taxon>
        <taxon>Asterales</taxon>
        <taxon>Asteraceae</taxon>
        <taxon>Asteroideae</taxon>
        <taxon>Heliantheae alliance</taxon>
        <taxon>Heliantheae</taxon>
        <taxon>Parthenium</taxon>
    </lineage>
</organism>
<dbReference type="EC" id="4.2.1.92" evidence="1"/>
<dbReference type="EMBL" id="X78166">
    <property type="protein sequence ID" value="CAA55025.2"/>
    <property type="molecule type" value="mRNA"/>
</dbReference>
<dbReference type="PIR" id="A56377">
    <property type="entry name" value="A56377"/>
</dbReference>
<dbReference type="PDB" id="3DAM">
    <property type="method" value="X-ray"/>
    <property type="resolution" value="2.40 A"/>
    <property type="chains" value="A=1-473"/>
</dbReference>
<dbReference type="PDB" id="3DAN">
    <property type="method" value="X-ray"/>
    <property type="resolution" value="1.80 A"/>
    <property type="chains" value="A=1-473"/>
</dbReference>
<dbReference type="PDB" id="3DBM">
    <property type="method" value="X-ray"/>
    <property type="resolution" value="2.60 A"/>
    <property type="chains" value="A=1-473"/>
</dbReference>
<dbReference type="PDBsum" id="3DAM"/>
<dbReference type="PDBsum" id="3DAN"/>
<dbReference type="PDBsum" id="3DBM"/>
<dbReference type="SMR" id="Q40778"/>
<dbReference type="UniPathway" id="UPA00382"/>
<dbReference type="EvolutionaryTrace" id="Q40778"/>
<dbReference type="GO" id="GO:0009941">
    <property type="term" value="C:chloroplast envelope"/>
    <property type="evidence" value="ECO:0007669"/>
    <property type="project" value="TreeGrafter"/>
</dbReference>
<dbReference type="GO" id="GO:0009535">
    <property type="term" value="C:chloroplast thylakoid membrane"/>
    <property type="evidence" value="ECO:0007669"/>
    <property type="project" value="TreeGrafter"/>
</dbReference>
<dbReference type="GO" id="GO:0009978">
    <property type="term" value="F:allene oxide synthase activity"/>
    <property type="evidence" value="ECO:0007669"/>
    <property type="project" value="UniProtKB-EC"/>
</dbReference>
<dbReference type="GO" id="GO:0020037">
    <property type="term" value="F:heme binding"/>
    <property type="evidence" value="ECO:0007669"/>
    <property type="project" value="InterPro"/>
</dbReference>
<dbReference type="GO" id="GO:0005506">
    <property type="term" value="F:iron ion binding"/>
    <property type="evidence" value="ECO:0007669"/>
    <property type="project" value="InterPro"/>
</dbReference>
<dbReference type="GO" id="GO:0004497">
    <property type="term" value="F:monooxygenase activity"/>
    <property type="evidence" value="ECO:0007669"/>
    <property type="project" value="InterPro"/>
</dbReference>
<dbReference type="GO" id="GO:0016705">
    <property type="term" value="F:oxidoreductase activity, acting on paired donors, with incorporation or reduction of molecular oxygen"/>
    <property type="evidence" value="ECO:0007669"/>
    <property type="project" value="InterPro"/>
</dbReference>
<dbReference type="GO" id="GO:0009695">
    <property type="term" value="P:jasmonic acid biosynthetic process"/>
    <property type="evidence" value="ECO:0007669"/>
    <property type="project" value="TreeGrafter"/>
</dbReference>
<dbReference type="GO" id="GO:0031408">
    <property type="term" value="P:oxylipin biosynthetic process"/>
    <property type="evidence" value="ECO:0007669"/>
    <property type="project" value="UniProtKB-UniPathway"/>
</dbReference>
<dbReference type="GO" id="GO:0016125">
    <property type="term" value="P:sterol metabolic process"/>
    <property type="evidence" value="ECO:0007669"/>
    <property type="project" value="TreeGrafter"/>
</dbReference>
<dbReference type="CDD" id="cd11071">
    <property type="entry name" value="CYP74"/>
    <property type="match status" value="1"/>
</dbReference>
<dbReference type="FunFam" id="1.10.630.10:FF:000024">
    <property type="entry name" value="Allene oxide synthase, chloroplastic"/>
    <property type="match status" value="1"/>
</dbReference>
<dbReference type="Gene3D" id="1.10.630.10">
    <property type="entry name" value="Cytochrome P450"/>
    <property type="match status" value="1"/>
</dbReference>
<dbReference type="InterPro" id="IPR001128">
    <property type="entry name" value="Cyt_P450"/>
</dbReference>
<dbReference type="InterPro" id="IPR002403">
    <property type="entry name" value="Cyt_P450_E_grp-IV"/>
</dbReference>
<dbReference type="InterPro" id="IPR036396">
    <property type="entry name" value="Cyt_P450_sf"/>
</dbReference>
<dbReference type="PANTHER" id="PTHR24286">
    <property type="entry name" value="CYTOCHROME P450 26"/>
    <property type="match status" value="1"/>
</dbReference>
<dbReference type="PANTHER" id="PTHR24286:SF330">
    <property type="entry name" value="CYTOCHROME P450 SUPERFAMILY"/>
    <property type="match status" value="1"/>
</dbReference>
<dbReference type="Pfam" id="PF00067">
    <property type="entry name" value="p450"/>
    <property type="match status" value="1"/>
</dbReference>
<dbReference type="PRINTS" id="PR00465">
    <property type="entry name" value="EP450IV"/>
</dbReference>
<dbReference type="SUPFAM" id="SSF48264">
    <property type="entry name" value="Cytochrome P450"/>
    <property type="match status" value="1"/>
</dbReference>
<evidence type="ECO:0000250" key="1">
    <source>
        <dbReference type="UniProtKB" id="Q96242"/>
    </source>
</evidence>
<evidence type="ECO:0000269" key="2">
    <source>
    </source>
</evidence>
<evidence type="ECO:0000269" key="3">
    <source>
    </source>
</evidence>
<evidence type="ECO:0000303" key="4">
    <source>
    </source>
</evidence>
<evidence type="ECO:0000305" key="5"/>
<evidence type="ECO:0000305" key="6">
    <source>
    </source>
</evidence>
<evidence type="ECO:0000305" key="7">
    <source>
    </source>
</evidence>
<evidence type="ECO:0007744" key="8">
    <source>
        <dbReference type="PDB" id="3DAM"/>
    </source>
</evidence>
<evidence type="ECO:0007744" key="9">
    <source>
        <dbReference type="PDB" id="3DAN"/>
    </source>
</evidence>
<evidence type="ECO:0007744" key="10">
    <source>
        <dbReference type="PDB" id="3DBM"/>
    </source>
</evidence>
<evidence type="ECO:0007829" key="11">
    <source>
        <dbReference type="PDB" id="3DAM"/>
    </source>
</evidence>
<evidence type="ECO:0007829" key="12">
    <source>
        <dbReference type="PDB" id="3DAN"/>
    </source>
</evidence>
<evidence type="ECO:0007829" key="13">
    <source>
        <dbReference type="PDB" id="3DBM"/>
    </source>
</evidence>
<sequence>MDPSSKPLREIPGSYGIPFFQPIKDRLEYFYGTGGRDEYFRSRMQKYQSTVFRANMPPGPFVSSNPKVIVLLDAKSFPILFDVSKVEKKDLFTGTYMPSTKLTGGYRVLSYLDPSEPRHAQLKNLLFFMLKNSSNRVIPQFETTYTELFEGLEAELAKNGKAAFNDVGEQAAFRFLGRAYFNSNPEETKLGTSAPTLISSWVLFNLAPTLDLGLPWFLQEPLLHTFRLPAFLIKSTYNKLYDYFQSVATPVMEQAEKLGVPKDEAVHNILFAVCFNTFGGVKILFPNTLKWIGLAGENLHTQLAEEIRGAIKSYGDGNVTLEAIEQMPLTKSVVYESLRIEPPVPPQYGKAKSNFTIESHDATFEVKKGEMLFGYQPFATKDPKVFDRPEEYVPDRFVGDGEALLKYVWWSNGPETESPTVENKQCAGKDFVVLITRLFVIELFRRYDSFEIELGESPLGAAVTLTFLKRASI</sequence>
<accession>Q40778</accession>
<keyword id="KW-0002">3D-structure</keyword>
<keyword id="KW-0903">Direct protein sequencing</keyword>
<keyword id="KW-0275">Fatty acid biosynthesis</keyword>
<keyword id="KW-0276">Fatty acid metabolism</keyword>
<keyword id="KW-0349">Heme</keyword>
<keyword id="KW-0408">Iron</keyword>
<keyword id="KW-0444">Lipid biosynthesis</keyword>
<keyword id="KW-0443">Lipid metabolism</keyword>
<keyword id="KW-0456">Lyase</keyword>
<keyword id="KW-0479">Metal-binding</keyword>
<keyword id="KW-0925">Oxylipin biosynthesis</keyword>
<comment type="function">
    <text evidence="1 3">Cytochrome P450 enzyme involved in the biosynthesis of oxylipin jasmonates, important phytohormones acting as growth regulators and signaling molecules for plant defense. Functions as an allene oxide synthase that converts hydroperoxy fatty acids to unstable allene epoxides (PubMed:7721745). Catalyzes the dehydration of 13-HPOTE ((13S)-hydroperoxy-(9Z,11E,15Z)-octadecatrienoate) (By similarity). Also catalyzes the dehydration of 13-HPODE ((13S)-hydroperoxy-(9Z,11E)-octadecadienoate) (PubMed:7721745).</text>
</comment>
<comment type="catalytic activity">
    <reaction evidence="1">
        <text>(13S)-hydroperoxy-(9Z,11E,15Z)-octadecatrienoate = (9Z,13S,15Z)-12,13-epoxyoctadeca-9,11,15-trienoate + H2O</text>
        <dbReference type="Rhea" id="RHEA:25074"/>
        <dbReference type="ChEBI" id="CHEBI:15377"/>
        <dbReference type="ChEBI" id="CHEBI:36438"/>
        <dbReference type="ChEBI" id="CHEBI:58757"/>
        <dbReference type="EC" id="4.2.1.92"/>
    </reaction>
    <physiologicalReaction direction="left-to-right" evidence="1">
        <dbReference type="Rhea" id="RHEA:25075"/>
    </physiologicalReaction>
</comment>
<comment type="catalytic activity">
    <reaction evidence="3">
        <text>(13S)-hydroperoxy-(9Z,11E)-octadecadienoate = (9Z,13S)-12,13-epoxyoctadeca-9,11-dienoate + H2O</text>
        <dbReference type="Rhea" id="RHEA:84075"/>
        <dbReference type="ChEBI" id="CHEBI:15377"/>
        <dbReference type="ChEBI" id="CHEBI:57465"/>
        <dbReference type="ChEBI" id="CHEBI:57466"/>
    </reaction>
    <physiologicalReaction direction="left-to-right" evidence="7">
        <dbReference type="Rhea" id="RHEA:84076"/>
    </physiologicalReaction>
</comment>
<comment type="cofactor">
    <cofactor evidence="2">
        <name>heme b</name>
        <dbReference type="ChEBI" id="CHEBI:60344"/>
    </cofactor>
</comment>
<comment type="pathway">
    <text evidence="7">Lipid metabolism; oxylipin biosynthesis.</text>
</comment>
<comment type="subcellular location">
    <text evidence="3">Rubber particle.</text>
</comment>
<comment type="similarity">
    <text evidence="5">Belongs to the cytochrome P450 family.</text>
</comment>
<proteinExistence type="evidence at protein level"/>
<reference key="1">
    <citation type="journal article" date="1995" name="J. Biol. Chem.">
        <title>The major protein of guayule rubber particles is a cytochrome P450. Characterization based on cDNA cloning and spectroscopic analysis of the solubilized enzyme and its reaction products.</title>
        <authorList>
            <person name="Pan Z."/>
            <person name="Durst F."/>
            <person name="Werck-Reichhart D."/>
            <person name="Gardner H.W."/>
            <person name="Camara B."/>
            <person name="Cornish K."/>
            <person name="Backhaus R.A."/>
        </authorList>
    </citation>
    <scope>NUCLEOTIDE SEQUENCE [MRNA]</scope>
    <scope>PROTEIN SEQUENCE OF 130-154; 253-282; 328-344 AND 372-407</scope>
    <scope>FUNCTION</scope>
    <scope>CATALYTIC ACTIVITY</scope>
    <source>
        <strain>cv. Line 11591</strain>
        <tissue>Stem bark</tissue>
    </source>
</reference>
<reference key="2">
    <citation type="submission" date="2008-09" db="EMBL/GenBank/DDBJ databases">
        <authorList>
            <person name="Backhaus R.A."/>
        </authorList>
    </citation>
    <scope>SEQUENCE REVISION</scope>
</reference>
<reference key="3">
    <citation type="journal article" date="1998" name="J. Biol. Chem.">
        <title>Aspirin inhibition and acetylation of the plant cytochrome P450, allene oxide synthase, resembles that of animal prostaglandin endoperoxide H synthase.</title>
        <authorList>
            <person name="Pan Z."/>
            <person name="Camara B."/>
            <person name="Gardner H.W."/>
            <person name="Backhaus R.A."/>
        </authorList>
    </citation>
    <scope>PROTEIN SEQUENCE OF 332-350; 353-368 AND 407-423</scope>
</reference>
<reference evidence="8 9 10" key="4">
    <citation type="journal article" date="2008" name="Proc. Natl. Acad. Sci. U.S.A.">
        <title>Modes of heme binding and substrate access for cytochrome P450 CYP74A revealed by crystal structures of allene oxide synthase.</title>
        <authorList>
            <person name="Li L."/>
            <person name="Chang Z."/>
            <person name="Pan Z."/>
            <person name="Fu Z.-Q."/>
            <person name="Wang X."/>
        </authorList>
    </citation>
    <scope>X-RAY CRYSTALLOGRAPHY (1.80 ANGSTROMS) IN COMPLEXES WITH HEME B AND SUBSTRATE ANALOG (13S)-HYDROXY-(9Z,11E)-OCTADECADIENOATE</scope>
    <scope>COFACTOR</scope>
</reference>
<feature type="chain" id="PRO_0000052128" description="Allene oxide synthase CYP74A2">
    <location>
        <begin position="1"/>
        <end position="473"/>
    </location>
</feature>
<feature type="binding site" evidence="2 8 9 10">
    <location>
        <position position="88"/>
    </location>
    <ligand>
        <name>heme b</name>
        <dbReference type="ChEBI" id="CHEBI:60344"/>
    </ligand>
</feature>
<feature type="binding site" evidence="2 8 9 10">
    <location>
        <position position="119"/>
    </location>
    <ligand>
        <name>heme b</name>
        <dbReference type="ChEBI" id="CHEBI:60344"/>
    </ligand>
</feature>
<feature type="binding site" evidence="2 8 9 10">
    <location>
        <position position="123"/>
    </location>
    <ligand>
        <name>heme b</name>
        <dbReference type="ChEBI" id="CHEBI:60344"/>
    </ligand>
</feature>
<feature type="binding site" evidence="6 10">
    <location>
        <position position="199"/>
    </location>
    <ligand>
        <name>(13S)-hydroperoxy-(9Z,11E)-octadecadienoate</name>
        <dbReference type="ChEBI" id="CHEBI:57466"/>
    </ligand>
</feature>
<feature type="binding site" evidence="6 10">
    <location>
        <position position="282"/>
    </location>
    <ligand>
        <name>(13S)-hydroperoxy-(9Z,11E)-octadecadienoate</name>
        <dbReference type="ChEBI" id="CHEBI:57466"/>
    </ligand>
</feature>
<feature type="binding site" evidence="2 8 9 10">
    <location>
        <position position="424"/>
    </location>
    <ligand>
        <name>heme b</name>
        <dbReference type="ChEBI" id="CHEBI:60344"/>
    </ligand>
</feature>
<feature type="binding site" description="axial binding residue" evidence="2 8 9 10">
    <location>
        <position position="426"/>
    </location>
    <ligand>
        <name>heme b</name>
        <dbReference type="ChEBI" id="CHEBI:60344"/>
    </ligand>
    <ligandPart>
        <name>Fe</name>
        <dbReference type="ChEBI" id="CHEBI:18248"/>
    </ligandPart>
</feature>
<feature type="sequence conflict" description="In Ref. 1; AA sequence." evidence="5" ref="1">
    <original>Y</original>
    <variation>F</variation>
    <location>
        <position position="392"/>
    </location>
</feature>
<feature type="sequence conflict" description="In Ref. 3; AA sequence." evidence="5" ref="3">
    <original>E</original>
    <variation>EE</variation>
    <location>
        <position position="415"/>
    </location>
</feature>
<feature type="helix" evidence="12">
    <location>
        <begin position="3"/>
        <end position="5"/>
    </location>
</feature>
<feature type="helix" evidence="12">
    <location>
        <begin position="20"/>
        <end position="31"/>
    </location>
</feature>
<feature type="helix" evidence="12">
    <location>
        <begin position="35"/>
        <end position="47"/>
    </location>
</feature>
<feature type="strand" evidence="12">
    <location>
        <begin position="50"/>
        <end position="55"/>
    </location>
</feature>
<feature type="turn" evidence="12">
    <location>
        <begin position="60"/>
        <end position="62"/>
    </location>
</feature>
<feature type="strand" evidence="12">
    <location>
        <begin position="67"/>
        <end position="71"/>
    </location>
</feature>
<feature type="turn" evidence="12">
    <location>
        <begin position="74"/>
        <end position="76"/>
    </location>
</feature>
<feature type="helix" evidence="12">
    <location>
        <begin position="77"/>
        <end position="81"/>
    </location>
</feature>
<feature type="turn" evidence="12">
    <location>
        <begin position="83"/>
        <end position="85"/>
    </location>
</feature>
<feature type="strand" evidence="12">
    <location>
        <begin position="94"/>
        <end position="96"/>
    </location>
</feature>
<feature type="helix" evidence="12">
    <location>
        <begin position="100"/>
        <end position="103"/>
    </location>
</feature>
<feature type="helix" evidence="12">
    <location>
        <begin position="109"/>
        <end position="111"/>
    </location>
</feature>
<feature type="helix" evidence="12">
    <location>
        <begin position="117"/>
        <end position="133"/>
    </location>
</feature>
<feature type="turn" evidence="12">
    <location>
        <begin position="134"/>
        <end position="136"/>
    </location>
</feature>
<feature type="helix" evidence="12">
    <location>
        <begin position="137"/>
        <end position="159"/>
    </location>
</feature>
<feature type="helix" evidence="12">
    <location>
        <begin position="165"/>
        <end position="181"/>
    </location>
</feature>
<feature type="helix" evidence="12">
    <location>
        <begin position="185"/>
        <end position="187"/>
    </location>
</feature>
<feature type="turn" evidence="12">
    <location>
        <begin position="189"/>
        <end position="192"/>
    </location>
</feature>
<feature type="helix" evidence="12">
    <location>
        <begin position="194"/>
        <end position="206"/>
    </location>
</feature>
<feature type="helix" evidence="12">
    <location>
        <begin position="207"/>
        <end position="209"/>
    </location>
</feature>
<feature type="helix" evidence="12">
    <location>
        <begin position="216"/>
        <end position="223"/>
    </location>
</feature>
<feature type="strand" evidence="12">
    <location>
        <begin position="224"/>
        <end position="226"/>
    </location>
</feature>
<feature type="helix" evidence="12">
    <location>
        <begin position="230"/>
        <end position="232"/>
    </location>
</feature>
<feature type="helix" evidence="12">
    <location>
        <begin position="234"/>
        <end position="247"/>
    </location>
</feature>
<feature type="helix" evidence="12">
    <location>
        <begin position="249"/>
        <end position="257"/>
    </location>
</feature>
<feature type="helix" evidence="12">
    <location>
        <begin position="262"/>
        <end position="274"/>
    </location>
</feature>
<feature type="helix" evidence="12">
    <location>
        <begin position="276"/>
        <end position="295"/>
    </location>
</feature>
<feature type="helix" evidence="12">
    <location>
        <begin position="297"/>
        <end position="314"/>
    </location>
</feature>
<feature type="strand" evidence="13">
    <location>
        <begin position="316"/>
        <end position="318"/>
    </location>
</feature>
<feature type="helix" evidence="12">
    <location>
        <begin position="321"/>
        <end position="325"/>
    </location>
</feature>
<feature type="helix" evidence="12">
    <location>
        <begin position="328"/>
        <end position="340"/>
    </location>
</feature>
<feature type="strand" evidence="12">
    <location>
        <begin position="346"/>
        <end position="353"/>
    </location>
</feature>
<feature type="strand" evidence="12">
    <location>
        <begin position="355"/>
        <end position="358"/>
    </location>
</feature>
<feature type="strand" evidence="12">
    <location>
        <begin position="363"/>
        <end position="366"/>
    </location>
</feature>
<feature type="strand" evidence="12">
    <location>
        <begin position="371"/>
        <end position="375"/>
    </location>
</feature>
<feature type="helix" evidence="12">
    <location>
        <begin position="376"/>
        <end position="379"/>
    </location>
</feature>
<feature type="turn" evidence="12">
    <location>
        <begin position="383"/>
        <end position="385"/>
    </location>
</feature>
<feature type="strand" evidence="12">
    <location>
        <begin position="386"/>
        <end position="388"/>
    </location>
</feature>
<feature type="turn" evidence="12">
    <location>
        <begin position="394"/>
        <end position="397"/>
    </location>
</feature>
<feature type="helix" evidence="12">
    <location>
        <begin position="399"/>
        <end position="407"/>
    </location>
</feature>
<feature type="strand" evidence="11">
    <location>
        <begin position="421"/>
        <end position="423"/>
    </location>
</feature>
<feature type="helix" evidence="12">
    <location>
        <begin position="429"/>
        <end position="446"/>
    </location>
</feature>
<feature type="strand" evidence="12">
    <location>
        <begin position="447"/>
        <end position="455"/>
    </location>
</feature>
<feature type="strand" evidence="12">
    <location>
        <begin position="458"/>
        <end position="460"/>
    </location>
</feature>
<feature type="strand" evidence="12">
    <location>
        <begin position="462"/>
        <end position="471"/>
    </location>
</feature>
<protein>
    <recommendedName>
        <fullName evidence="7">Allene oxide synthase CYP74A2</fullName>
        <ecNumber evidence="1">4.2.1.92</ecNumber>
    </recommendedName>
    <alternativeName>
        <fullName evidence="4">Cytochrome P450 74A2</fullName>
    </alternativeName>
    <alternativeName>
        <fullName evidence="4">Hydroperoxide dehydratase</fullName>
    </alternativeName>
    <alternativeName>
        <fullName evidence="4">Rubber particle protein</fullName>
        <shortName evidence="4">RPP</shortName>
    </alternativeName>
</protein>
<gene>
    <name evidence="4" type="primary">CYP74A2</name>
    <name type="synonym">RPP30</name>
</gene>